<dbReference type="EMBL" id="AE006914">
    <property type="protein sequence ID" value="AAL03534.1"/>
    <property type="molecule type" value="Genomic_DNA"/>
</dbReference>
<dbReference type="PIR" id="D97824">
    <property type="entry name" value="D97824"/>
</dbReference>
<dbReference type="RefSeq" id="WP_004997813.1">
    <property type="nucleotide sequence ID" value="NC_003103.1"/>
</dbReference>
<dbReference type="SMR" id="Q92GX6"/>
<dbReference type="GeneID" id="95361476"/>
<dbReference type="KEGG" id="rco:RC0996"/>
<dbReference type="HOGENOM" id="CLU_095071_2_1_5"/>
<dbReference type="Proteomes" id="UP000000816">
    <property type="component" value="Chromosome"/>
</dbReference>
<dbReference type="GO" id="GO:0022625">
    <property type="term" value="C:cytosolic large ribosomal subunit"/>
    <property type="evidence" value="ECO:0007669"/>
    <property type="project" value="TreeGrafter"/>
</dbReference>
<dbReference type="GO" id="GO:0070180">
    <property type="term" value="F:large ribosomal subunit rRNA binding"/>
    <property type="evidence" value="ECO:0007669"/>
    <property type="project" value="TreeGrafter"/>
</dbReference>
<dbReference type="GO" id="GO:0003735">
    <property type="term" value="F:structural constituent of ribosome"/>
    <property type="evidence" value="ECO:0007669"/>
    <property type="project" value="InterPro"/>
</dbReference>
<dbReference type="GO" id="GO:0006412">
    <property type="term" value="P:translation"/>
    <property type="evidence" value="ECO:0007669"/>
    <property type="project" value="UniProtKB-UniRule"/>
</dbReference>
<dbReference type="CDD" id="cd00337">
    <property type="entry name" value="Ribosomal_uL14"/>
    <property type="match status" value="1"/>
</dbReference>
<dbReference type="FunFam" id="2.40.150.20:FF:000001">
    <property type="entry name" value="50S ribosomal protein L14"/>
    <property type="match status" value="1"/>
</dbReference>
<dbReference type="Gene3D" id="2.40.150.20">
    <property type="entry name" value="Ribosomal protein L14"/>
    <property type="match status" value="1"/>
</dbReference>
<dbReference type="HAMAP" id="MF_01367">
    <property type="entry name" value="Ribosomal_uL14"/>
    <property type="match status" value="1"/>
</dbReference>
<dbReference type="InterPro" id="IPR000218">
    <property type="entry name" value="Ribosomal_uL14"/>
</dbReference>
<dbReference type="InterPro" id="IPR005745">
    <property type="entry name" value="Ribosomal_uL14_bac-type"/>
</dbReference>
<dbReference type="InterPro" id="IPR019972">
    <property type="entry name" value="Ribosomal_uL14_CS"/>
</dbReference>
<dbReference type="InterPro" id="IPR036853">
    <property type="entry name" value="Ribosomal_uL14_sf"/>
</dbReference>
<dbReference type="NCBIfam" id="TIGR01067">
    <property type="entry name" value="rplN_bact"/>
    <property type="match status" value="1"/>
</dbReference>
<dbReference type="PANTHER" id="PTHR11761">
    <property type="entry name" value="50S/60S RIBOSOMAL PROTEIN L14/L23"/>
    <property type="match status" value="1"/>
</dbReference>
<dbReference type="PANTHER" id="PTHR11761:SF3">
    <property type="entry name" value="LARGE RIBOSOMAL SUBUNIT PROTEIN UL14M"/>
    <property type="match status" value="1"/>
</dbReference>
<dbReference type="Pfam" id="PF00238">
    <property type="entry name" value="Ribosomal_L14"/>
    <property type="match status" value="1"/>
</dbReference>
<dbReference type="SMART" id="SM01374">
    <property type="entry name" value="Ribosomal_L14"/>
    <property type="match status" value="1"/>
</dbReference>
<dbReference type="SUPFAM" id="SSF50193">
    <property type="entry name" value="Ribosomal protein L14"/>
    <property type="match status" value="1"/>
</dbReference>
<dbReference type="PROSITE" id="PS00049">
    <property type="entry name" value="RIBOSOMAL_L14"/>
    <property type="match status" value="1"/>
</dbReference>
<comment type="function">
    <text evidence="1">Binds to 23S rRNA. Forms part of two intersubunit bridges in the 70S ribosome.</text>
</comment>
<comment type="subunit">
    <text evidence="1">Part of the 50S ribosomal subunit. Forms a cluster with proteins L3 and L19. In the 70S ribosome, L14 and L19 interact and together make contacts with the 16S rRNA in bridges B5 and B8.</text>
</comment>
<comment type="similarity">
    <text evidence="1">Belongs to the universal ribosomal protein uL14 family.</text>
</comment>
<sequence length="122" mass="13229">MIQMQSILEVADNSGAKKVMCIKVLGGSHHMVAKLGDVIVVSVKDAIPGGKVKKGDVYKGVIVRTKTGVVRPDGSTIKFDQNALVLLNKQDEPIGTRVFGPVTRELRAKKYVRIMSLAEEVL</sequence>
<keyword id="KW-0687">Ribonucleoprotein</keyword>
<keyword id="KW-0689">Ribosomal protein</keyword>
<keyword id="KW-0694">RNA-binding</keyword>
<keyword id="KW-0699">rRNA-binding</keyword>
<feature type="chain" id="PRO_0000272387" description="Large ribosomal subunit protein uL14">
    <location>
        <begin position="1"/>
        <end position="122"/>
    </location>
</feature>
<proteinExistence type="inferred from homology"/>
<protein>
    <recommendedName>
        <fullName evidence="1">Large ribosomal subunit protein uL14</fullName>
    </recommendedName>
    <alternativeName>
        <fullName evidence="2">50S ribosomal protein L14</fullName>
    </alternativeName>
</protein>
<gene>
    <name evidence="1" type="primary">rplN</name>
    <name type="ordered locus">RC0996</name>
</gene>
<organism>
    <name type="scientific">Rickettsia conorii (strain ATCC VR-613 / Malish 7)</name>
    <dbReference type="NCBI Taxonomy" id="272944"/>
    <lineage>
        <taxon>Bacteria</taxon>
        <taxon>Pseudomonadati</taxon>
        <taxon>Pseudomonadota</taxon>
        <taxon>Alphaproteobacteria</taxon>
        <taxon>Rickettsiales</taxon>
        <taxon>Rickettsiaceae</taxon>
        <taxon>Rickettsieae</taxon>
        <taxon>Rickettsia</taxon>
        <taxon>spotted fever group</taxon>
    </lineage>
</organism>
<evidence type="ECO:0000255" key="1">
    <source>
        <dbReference type="HAMAP-Rule" id="MF_01367"/>
    </source>
</evidence>
<evidence type="ECO:0000305" key="2"/>
<accession>Q92GX6</accession>
<name>RL14_RICCN</name>
<reference key="1">
    <citation type="journal article" date="2001" name="Science">
        <title>Mechanisms of evolution in Rickettsia conorii and R. prowazekii.</title>
        <authorList>
            <person name="Ogata H."/>
            <person name="Audic S."/>
            <person name="Renesto-Audiffren P."/>
            <person name="Fournier P.-E."/>
            <person name="Barbe V."/>
            <person name="Samson D."/>
            <person name="Roux V."/>
            <person name="Cossart P."/>
            <person name="Weissenbach J."/>
            <person name="Claverie J.-M."/>
            <person name="Raoult D."/>
        </authorList>
    </citation>
    <scope>NUCLEOTIDE SEQUENCE [LARGE SCALE GENOMIC DNA]</scope>
    <source>
        <strain>ATCC VR-613 / Malish 7</strain>
    </source>
</reference>